<organism>
    <name type="scientific">Pseudonaja textilis</name>
    <name type="common">Eastern brown snake</name>
    <dbReference type="NCBI Taxonomy" id="8673"/>
    <lineage>
        <taxon>Eukaryota</taxon>
        <taxon>Metazoa</taxon>
        <taxon>Chordata</taxon>
        <taxon>Craniata</taxon>
        <taxon>Vertebrata</taxon>
        <taxon>Euteleostomi</taxon>
        <taxon>Lepidosauria</taxon>
        <taxon>Squamata</taxon>
        <taxon>Bifurcata</taxon>
        <taxon>Unidentata</taxon>
        <taxon>Episquamata</taxon>
        <taxon>Toxicofera</taxon>
        <taxon>Serpentes</taxon>
        <taxon>Colubroidea</taxon>
        <taxon>Elapidae</taxon>
        <taxon>Hydrophiinae</taxon>
        <taxon>Pseudonaja</taxon>
    </lineage>
</organism>
<comment type="function">
    <text evidence="1">May be involved in the cellular control mechanism of the secretion of toxins from the gland into the venom.</text>
</comment>
<comment type="subcellular location">
    <subcellularLocation>
        <location evidence="3">Cytoplasm</location>
    </subcellularLocation>
    <text evidence="1">Not found in venom.</text>
</comment>
<comment type="tissue specificity">
    <text>Expressed by the venom gland.</text>
</comment>
<comment type="similarity">
    <text evidence="3">Belongs to the calmodulin family. Calglandulin subfamily.</text>
</comment>
<accession>Q3SB13</accession>
<reference key="1">
    <citation type="journal article" date="2005" name="Cell. Mol. Life Sci.">
        <title>Identification and analysis of venom gland-specific genes from the coastal taipan (Oxyuranus scutellatus) and related species.</title>
        <authorList>
            <person name="St Pierre L."/>
            <person name="Woods R."/>
            <person name="Earl S.T.H."/>
            <person name="Masci P.P."/>
            <person name="Lavin M.F."/>
        </authorList>
    </citation>
    <scope>NUCLEOTIDE SEQUENCE [MRNA]</scope>
    <source>
        <tissue>Venom gland</tissue>
    </source>
</reference>
<feature type="chain" id="PRO_0000073556" description="Calglandulin">
    <location>
        <begin position="1"/>
        <end position="156"/>
    </location>
</feature>
<feature type="domain" description="EF-hand 1" evidence="2">
    <location>
        <begin position="8"/>
        <end position="43"/>
    </location>
</feature>
<feature type="domain" description="EF-hand 2" evidence="2">
    <location>
        <begin position="44"/>
        <end position="79"/>
    </location>
</feature>
<feature type="domain" description="EF-hand 3" evidence="2">
    <location>
        <begin position="82"/>
        <end position="117"/>
    </location>
</feature>
<feature type="domain" description="EF-hand 4" evidence="2">
    <location>
        <begin position="118"/>
        <end position="153"/>
    </location>
</feature>
<feature type="binding site" evidence="2">
    <location>
        <position position="131"/>
    </location>
    <ligand>
        <name>Ca(2+)</name>
        <dbReference type="ChEBI" id="CHEBI:29108"/>
    </ligand>
</feature>
<feature type="binding site" evidence="2">
    <location>
        <position position="133"/>
    </location>
    <ligand>
        <name>Ca(2+)</name>
        <dbReference type="ChEBI" id="CHEBI:29108"/>
    </ligand>
</feature>
<feature type="binding site" evidence="2">
    <location>
        <position position="135"/>
    </location>
    <ligand>
        <name>Ca(2+)</name>
        <dbReference type="ChEBI" id="CHEBI:29108"/>
    </ligand>
</feature>
<feature type="binding site" evidence="2">
    <location>
        <position position="137"/>
    </location>
    <ligand>
        <name>Ca(2+)</name>
        <dbReference type="ChEBI" id="CHEBI:29108"/>
    </ligand>
</feature>
<feature type="binding site" evidence="2">
    <location>
        <position position="142"/>
    </location>
    <ligand>
        <name>Ca(2+)</name>
        <dbReference type="ChEBI" id="CHEBI:29108"/>
    </ligand>
</feature>
<name>CALGL_PSETE</name>
<proteinExistence type="evidence at transcript level"/>
<dbReference type="EMBL" id="DQ084029">
    <property type="protein sequence ID" value="AAZ38974.1"/>
    <property type="molecule type" value="mRNA"/>
</dbReference>
<dbReference type="SMR" id="Q3SB13"/>
<dbReference type="Proteomes" id="UP000472273">
    <property type="component" value="Unplaced"/>
</dbReference>
<dbReference type="GO" id="GO:0005737">
    <property type="term" value="C:cytoplasm"/>
    <property type="evidence" value="ECO:0007669"/>
    <property type="project" value="UniProtKB-SubCell"/>
</dbReference>
<dbReference type="GO" id="GO:0016460">
    <property type="term" value="C:myosin II complex"/>
    <property type="evidence" value="ECO:0007669"/>
    <property type="project" value="TreeGrafter"/>
</dbReference>
<dbReference type="GO" id="GO:0005509">
    <property type="term" value="F:calcium ion binding"/>
    <property type="evidence" value="ECO:0007669"/>
    <property type="project" value="InterPro"/>
</dbReference>
<dbReference type="CDD" id="cd00051">
    <property type="entry name" value="EFh"/>
    <property type="match status" value="1"/>
</dbReference>
<dbReference type="FunFam" id="1.10.238.10:FF:000163">
    <property type="entry name" value="Calmodulin like 6"/>
    <property type="match status" value="1"/>
</dbReference>
<dbReference type="Gene3D" id="1.10.238.10">
    <property type="entry name" value="EF-hand"/>
    <property type="match status" value="2"/>
</dbReference>
<dbReference type="InterPro" id="IPR050230">
    <property type="entry name" value="CALM/Myosin/TropC-like"/>
</dbReference>
<dbReference type="InterPro" id="IPR011992">
    <property type="entry name" value="EF-hand-dom_pair"/>
</dbReference>
<dbReference type="InterPro" id="IPR018247">
    <property type="entry name" value="EF_Hand_1_Ca_BS"/>
</dbReference>
<dbReference type="InterPro" id="IPR002048">
    <property type="entry name" value="EF_hand_dom"/>
</dbReference>
<dbReference type="PANTHER" id="PTHR23048:SF56">
    <property type="entry name" value="CALMODULIN 2"/>
    <property type="match status" value="1"/>
</dbReference>
<dbReference type="PANTHER" id="PTHR23048">
    <property type="entry name" value="MYOSIN LIGHT CHAIN 1, 3"/>
    <property type="match status" value="1"/>
</dbReference>
<dbReference type="Pfam" id="PF13499">
    <property type="entry name" value="EF-hand_7"/>
    <property type="match status" value="1"/>
</dbReference>
<dbReference type="Pfam" id="PF13833">
    <property type="entry name" value="EF-hand_8"/>
    <property type="match status" value="1"/>
</dbReference>
<dbReference type="SMART" id="SM00054">
    <property type="entry name" value="EFh"/>
    <property type="match status" value="4"/>
</dbReference>
<dbReference type="SUPFAM" id="SSF47473">
    <property type="entry name" value="EF-hand"/>
    <property type="match status" value="1"/>
</dbReference>
<dbReference type="PROSITE" id="PS00018">
    <property type="entry name" value="EF_HAND_1"/>
    <property type="match status" value="1"/>
</dbReference>
<dbReference type="PROSITE" id="PS50222">
    <property type="entry name" value="EF_HAND_2"/>
    <property type="match status" value="4"/>
</dbReference>
<sequence>MAATLTPEQITEYKGIFEMFDEEGNGLVKTDDLESLMSLIGINPTKRDLANMAKDVDKDKKGTFNCDGFLVLMGIYHEKSKNQDEELRAAFKVFDKEHKGYIEWDTLKYVLMNAGEPLNEHEAELMMKEADKDGDGTIDYEEFVAMMTGESFKLTQ</sequence>
<keyword id="KW-0106">Calcium</keyword>
<keyword id="KW-0963">Cytoplasm</keyword>
<keyword id="KW-0479">Metal-binding</keyword>
<keyword id="KW-1185">Reference proteome</keyword>
<keyword id="KW-0677">Repeat</keyword>
<protein>
    <recommendedName>
        <fullName>Calglandulin</fullName>
    </recommendedName>
</protein>
<evidence type="ECO:0000250" key="1"/>
<evidence type="ECO:0000255" key="2">
    <source>
        <dbReference type="PROSITE-ProRule" id="PRU00448"/>
    </source>
</evidence>
<evidence type="ECO:0000305" key="3"/>